<feature type="chain" id="PRO_0000090541" description="Rhamnulokinase">
    <location>
        <begin position="1"/>
        <end position="470"/>
    </location>
</feature>
<feature type="active site" description="Proton acceptor" evidence="1">
    <location>
        <position position="238"/>
    </location>
</feature>
<feature type="binding site" evidence="1">
    <location>
        <begin position="12"/>
        <end position="16"/>
    </location>
    <ligand>
        <name>ATP</name>
        <dbReference type="ChEBI" id="CHEBI:30616"/>
    </ligand>
</feature>
<feature type="binding site" evidence="1">
    <location>
        <position position="80"/>
    </location>
    <ligand>
        <name>substrate</name>
    </ligand>
</feature>
<feature type="binding site" evidence="1">
    <location>
        <begin position="237"/>
        <end position="239"/>
    </location>
    <ligand>
        <name>substrate</name>
    </ligand>
</feature>
<feature type="binding site" evidence="1">
    <location>
        <position position="259"/>
    </location>
    <ligand>
        <name>ATP</name>
        <dbReference type="ChEBI" id="CHEBI:30616"/>
    </ligand>
</feature>
<feature type="binding site" evidence="1">
    <location>
        <position position="296"/>
    </location>
    <ligand>
        <name>substrate</name>
    </ligand>
</feature>
<feature type="binding site" evidence="1">
    <location>
        <position position="304"/>
    </location>
    <ligand>
        <name>ATP</name>
        <dbReference type="ChEBI" id="CHEBI:30616"/>
    </ligand>
</feature>
<feature type="binding site" evidence="1">
    <location>
        <position position="402"/>
    </location>
    <ligand>
        <name>ATP</name>
        <dbReference type="ChEBI" id="CHEBI:30616"/>
    </ligand>
</feature>
<feature type="disulfide bond" evidence="1">
    <location>
        <begin position="353"/>
        <end position="370"/>
    </location>
</feature>
<accession>Q8ESX1</accession>
<reference key="1">
    <citation type="journal article" date="2002" name="Nucleic Acids Res.">
        <title>Genome sequence of Oceanobacillus iheyensis isolated from the Iheya Ridge and its unexpected adaptive capabilities to extreme environments.</title>
        <authorList>
            <person name="Takami H."/>
            <person name="Takaki Y."/>
            <person name="Uchiyama I."/>
        </authorList>
    </citation>
    <scope>NUCLEOTIDE SEQUENCE [LARGE SCALE GENOMIC DNA]</scope>
    <source>
        <strain>DSM 14371 / CIP 107618 / JCM 11309 / KCTC 3954 / HTE831</strain>
    </source>
</reference>
<evidence type="ECO:0000255" key="1">
    <source>
        <dbReference type="HAMAP-Rule" id="MF_01535"/>
    </source>
</evidence>
<gene>
    <name evidence="1" type="primary">rhaB</name>
    <name type="ordered locus">OB0495</name>
</gene>
<protein>
    <recommendedName>
        <fullName evidence="1">Rhamnulokinase</fullName>
        <shortName evidence="1">RhaB</shortName>
        <ecNumber evidence="1">2.7.1.5</ecNumber>
    </recommendedName>
    <alternativeName>
        <fullName evidence="1">ATP:L-rhamnulose phosphotransferase</fullName>
    </alternativeName>
    <alternativeName>
        <fullName evidence="1">L-rhamnulose 1-kinase</fullName>
    </alternativeName>
    <alternativeName>
        <fullName evidence="1">Rhamnulose kinase</fullName>
    </alternativeName>
</protein>
<name>RHAB_OCEIH</name>
<dbReference type="EC" id="2.7.1.5" evidence="1"/>
<dbReference type="EMBL" id="BA000028">
    <property type="protein sequence ID" value="BAC12451.1"/>
    <property type="molecule type" value="Genomic_DNA"/>
</dbReference>
<dbReference type="RefSeq" id="WP_011064899.1">
    <property type="nucleotide sequence ID" value="NC_004193.1"/>
</dbReference>
<dbReference type="SMR" id="Q8ESX1"/>
<dbReference type="STRING" id="221109.gene:10732698"/>
<dbReference type="KEGG" id="oih:OB0495"/>
<dbReference type="eggNOG" id="COG1070">
    <property type="taxonomic scope" value="Bacteria"/>
</dbReference>
<dbReference type="HOGENOM" id="CLU_039395_0_1_9"/>
<dbReference type="OrthoDB" id="9761504at2"/>
<dbReference type="PhylomeDB" id="Q8ESX1"/>
<dbReference type="UniPathway" id="UPA00541">
    <property type="reaction ID" value="UER00602"/>
</dbReference>
<dbReference type="Proteomes" id="UP000000822">
    <property type="component" value="Chromosome"/>
</dbReference>
<dbReference type="GO" id="GO:0005829">
    <property type="term" value="C:cytosol"/>
    <property type="evidence" value="ECO:0007669"/>
    <property type="project" value="TreeGrafter"/>
</dbReference>
<dbReference type="GO" id="GO:0005524">
    <property type="term" value="F:ATP binding"/>
    <property type="evidence" value="ECO:0007669"/>
    <property type="project" value="UniProtKB-KW"/>
</dbReference>
<dbReference type="GO" id="GO:0004370">
    <property type="term" value="F:glycerol kinase activity"/>
    <property type="evidence" value="ECO:0007669"/>
    <property type="project" value="TreeGrafter"/>
</dbReference>
<dbReference type="GO" id="GO:0008993">
    <property type="term" value="F:rhamnulokinase activity"/>
    <property type="evidence" value="ECO:0007669"/>
    <property type="project" value="UniProtKB-UniRule"/>
</dbReference>
<dbReference type="GO" id="GO:0006071">
    <property type="term" value="P:glycerol metabolic process"/>
    <property type="evidence" value="ECO:0007669"/>
    <property type="project" value="TreeGrafter"/>
</dbReference>
<dbReference type="GO" id="GO:0019301">
    <property type="term" value="P:rhamnose catabolic process"/>
    <property type="evidence" value="ECO:0007669"/>
    <property type="project" value="UniProtKB-UniRule"/>
</dbReference>
<dbReference type="CDD" id="cd07771">
    <property type="entry name" value="ASKHA_NBD_FGGY_RhaB-like"/>
    <property type="match status" value="1"/>
</dbReference>
<dbReference type="Gene3D" id="3.30.420.40">
    <property type="match status" value="2"/>
</dbReference>
<dbReference type="HAMAP" id="MF_01535">
    <property type="entry name" value="Rhamnulokinase"/>
    <property type="match status" value="1"/>
</dbReference>
<dbReference type="InterPro" id="IPR043129">
    <property type="entry name" value="ATPase_NBD"/>
</dbReference>
<dbReference type="InterPro" id="IPR000577">
    <property type="entry name" value="Carb_kinase_FGGY"/>
</dbReference>
<dbReference type="InterPro" id="IPR018485">
    <property type="entry name" value="FGGY_C"/>
</dbReference>
<dbReference type="InterPro" id="IPR018484">
    <property type="entry name" value="FGGY_N"/>
</dbReference>
<dbReference type="InterPro" id="IPR013449">
    <property type="entry name" value="Rhamnulokinase"/>
</dbReference>
<dbReference type="NCBIfam" id="TIGR02627">
    <property type="entry name" value="rhamnulo_kin"/>
    <property type="match status" value="1"/>
</dbReference>
<dbReference type="PANTHER" id="PTHR10196:SF93">
    <property type="entry name" value="L-RHAMNULOKINASE"/>
    <property type="match status" value="1"/>
</dbReference>
<dbReference type="PANTHER" id="PTHR10196">
    <property type="entry name" value="SUGAR KINASE"/>
    <property type="match status" value="1"/>
</dbReference>
<dbReference type="Pfam" id="PF02782">
    <property type="entry name" value="FGGY_C"/>
    <property type="match status" value="1"/>
</dbReference>
<dbReference type="Pfam" id="PF00370">
    <property type="entry name" value="FGGY_N"/>
    <property type="match status" value="1"/>
</dbReference>
<dbReference type="PIRSF" id="PIRSF000538">
    <property type="entry name" value="GlpK"/>
    <property type="match status" value="1"/>
</dbReference>
<dbReference type="SUPFAM" id="SSF53067">
    <property type="entry name" value="Actin-like ATPase domain"/>
    <property type="match status" value="2"/>
</dbReference>
<organism>
    <name type="scientific">Oceanobacillus iheyensis (strain DSM 14371 / CIP 107618 / JCM 11309 / KCTC 3954 / HTE831)</name>
    <dbReference type="NCBI Taxonomy" id="221109"/>
    <lineage>
        <taxon>Bacteria</taxon>
        <taxon>Bacillati</taxon>
        <taxon>Bacillota</taxon>
        <taxon>Bacilli</taxon>
        <taxon>Bacillales</taxon>
        <taxon>Bacillaceae</taxon>
        <taxon>Oceanobacillus</taxon>
    </lineage>
</organism>
<comment type="function">
    <text evidence="1">Involved in the catabolism of L-rhamnose (6-deoxy-L-mannose). Catalyzes the transfer of the gamma-phosphate group from ATP to the 1-hydroxyl group of L-rhamnulose to yield L-rhamnulose 1-phosphate.</text>
</comment>
<comment type="catalytic activity">
    <reaction evidence="1">
        <text>L-rhamnulose + ATP = L-rhamnulose 1-phosphate + ADP + H(+)</text>
        <dbReference type="Rhea" id="RHEA:20117"/>
        <dbReference type="ChEBI" id="CHEBI:15378"/>
        <dbReference type="ChEBI" id="CHEBI:17897"/>
        <dbReference type="ChEBI" id="CHEBI:30616"/>
        <dbReference type="ChEBI" id="CHEBI:58313"/>
        <dbReference type="ChEBI" id="CHEBI:456216"/>
        <dbReference type="EC" id="2.7.1.5"/>
    </reaction>
</comment>
<comment type="cofactor">
    <cofactor evidence="1">
        <name>Mg(2+)</name>
        <dbReference type="ChEBI" id="CHEBI:18420"/>
    </cofactor>
</comment>
<comment type="pathway">
    <text evidence="1">Carbohydrate degradation; L-rhamnose degradation; glycerone phosphate from L-rhamnose: step 2/3.</text>
</comment>
<comment type="similarity">
    <text evidence="1">Belongs to the rhamnulokinase family.</text>
</comment>
<proteinExistence type="inferred from homology"/>
<sequence>MQQCNLAVDIGASSGRVIAGYLQNGKLQLEEVHRFDNKLIDLNNYFCWDIDRIYQEILMGIKSAVDNGYQPISLGIDTWAVDFVLLDENDMRLTDAVSYRDPRTDGMMEEVFSQISKERLYLETGIQFQKFNTMYQLQALKNSNPDLIEKATSFLMIPDYLNFLLTGKKVNEYTNATTTQLVNAFTKKWDIDLIEQLGFNSNMFMDIQPPESVIGNLRPELQEELGVDFNVILPATHDTGSAVVAVPEQENSIYISSGTWSLIGVENHFPICTTKALDYNFTNEGGADYRYRFLKNIMGLWMIQEVKRNFNDEFEFADFAAMAKGESFKSIVDVDDDRFLKPENMIEEIKAYCKETNQAIPQSPSEVAKCVFNSLAVSYQQAISQIEEIYEIDFPTIYVIGGGSKNEMLNQLIADTTGKTVIAGLSEATAIGNLIVQMMAIDQIDDMQQARQIIKHSFDLYTYAKVTMEG</sequence>
<keyword id="KW-0067">ATP-binding</keyword>
<keyword id="KW-1015">Disulfide bond</keyword>
<keyword id="KW-0418">Kinase</keyword>
<keyword id="KW-0547">Nucleotide-binding</keyword>
<keyword id="KW-1185">Reference proteome</keyword>
<keyword id="KW-0684">Rhamnose metabolism</keyword>
<keyword id="KW-0808">Transferase</keyword>